<sequence>MSIAESTVLGEEPEWFRTAVFYEVLVRSFRDPNAGGTGDFRGLAEKLDYLQWLGVDCLWVPPFFSSPLRDGGYDVADYTGILPEIGTVEDFHAFLDGAHERGIRVIIDFVMNHTSDAHPWFQASRSDPDGPYGDFYVWSDTDELYQDARVIFVDTEPSNWTWDQTRGQYYWHRFFHHQPDLNFDNPKVQDAMLEAMAFWLDMGLDGFRLDAVPYLYERPGTNGENLPETHEMLKRVRRFVDDNYPDRVLLYEANQWPTDVVEYFGPEEREDGTVVGPESHMAFHFPVMPRIFMAVRRESRFPISEIMEQTPAIPEGCQWGIFLRNHDELTLEMVTDEDRDYMWGEYAKDPRMKANIGIRRRLAPLLDNDTNQIELFTALLLSLPGSPVLYYGDEIGMGDNIWLGDRDGVRTPMQRTPDRNVGFSAATPGKLHLPTIQDPVYGYQSVNVEAQLENPSSLLHWTRRMIHIRRQRDAFGLGTFEDLGGSNPAVLSYVRELPGDGGDDVILCVNNLSRFPQPVELDLRKYEGRVPVELIGGVPFPAVGELPYLLTLSGHGFYWFRLTDPDTTGRPVL</sequence>
<name>TRES_PIMSR</name>
<organism>
    <name type="scientific">Pimelobacter sp. (strain R48)</name>
    <dbReference type="NCBI Taxonomy" id="51662"/>
    <lineage>
        <taxon>Bacteria</taxon>
        <taxon>Bacillati</taxon>
        <taxon>Actinomycetota</taxon>
        <taxon>Actinomycetes</taxon>
        <taxon>Propionibacteriales</taxon>
        <taxon>Nocardioidaceae</taxon>
        <taxon>Pimelobacter</taxon>
    </lineage>
</organism>
<accession>P72235</accession>
<reference key="1">
    <citation type="journal article" date="1996" name="Biochim. Biophys. Acta">
        <title>Cloning and sequencing of trehalose synthase gene from Pimelobacter sp. R48.</title>
        <authorList>
            <person name="Tsusaki K."/>
            <person name="Nishimoto T."/>
            <person name="Nakada T."/>
            <person name="Kubota M."/>
            <person name="Chaen H."/>
            <person name="Sugimoto T."/>
            <person name="Kurimoto M."/>
        </authorList>
    </citation>
    <scope>NUCLEOTIDE SEQUENCE [GENOMIC DNA]</scope>
    <source>
        <strain>R48</strain>
    </source>
</reference>
<dbReference type="EC" id="5.4.99.16" evidence="1"/>
<dbReference type="EMBL" id="D78198">
    <property type="protein sequence ID" value="BAA11303.1"/>
    <property type="molecule type" value="Genomic_DNA"/>
</dbReference>
<dbReference type="PIR" id="S71450">
    <property type="entry name" value="S71450"/>
</dbReference>
<dbReference type="SMR" id="P72235"/>
<dbReference type="CAZy" id="GH13">
    <property type="family name" value="Glycoside Hydrolase Family 13"/>
</dbReference>
<dbReference type="BioCyc" id="MetaCyc:MONOMER-5647"/>
<dbReference type="GO" id="GO:0047471">
    <property type="term" value="F:maltose alpha-D-glucosyltransferase activity"/>
    <property type="evidence" value="ECO:0007669"/>
    <property type="project" value="UniProtKB-EC"/>
</dbReference>
<dbReference type="GO" id="GO:0046872">
    <property type="term" value="F:metal ion binding"/>
    <property type="evidence" value="ECO:0007669"/>
    <property type="project" value="UniProtKB-KW"/>
</dbReference>
<dbReference type="GO" id="GO:0005975">
    <property type="term" value="P:carbohydrate metabolic process"/>
    <property type="evidence" value="ECO:0007669"/>
    <property type="project" value="InterPro"/>
</dbReference>
<dbReference type="CDD" id="cd11334">
    <property type="entry name" value="AmyAc_TreS"/>
    <property type="match status" value="1"/>
</dbReference>
<dbReference type="FunFam" id="3.20.20.80:FF:000055">
    <property type="entry name" value="Trehalose synthase"/>
    <property type="match status" value="1"/>
</dbReference>
<dbReference type="Gene3D" id="3.20.20.80">
    <property type="entry name" value="Glycosidases"/>
    <property type="match status" value="1"/>
</dbReference>
<dbReference type="Gene3D" id="2.60.40.1180">
    <property type="entry name" value="Golgi alpha-mannosidase II"/>
    <property type="match status" value="1"/>
</dbReference>
<dbReference type="Gene3D" id="3.90.400.10">
    <property type="entry name" value="Oligo-1,6-glucosidase, Domain 2"/>
    <property type="match status" value="1"/>
</dbReference>
<dbReference type="InterPro" id="IPR006047">
    <property type="entry name" value="Glyco_hydro_13_cat_dom"/>
</dbReference>
<dbReference type="InterPro" id="IPR013780">
    <property type="entry name" value="Glyco_hydro_b"/>
</dbReference>
<dbReference type="InterPro" id="IPR017853">
    <property type="entry name" value="Glycoside_hydrolase_SF"/>
</dbReference>
<dbReference type="InterPro" id="IPR032091">
    <property type="entry name" value="Malt_amylase-like_C"/>
</dbReference>
<dbReference type="InterPro" id="IPR045857">
    <property type="entry name" value="O16G_dom_2"/>
</dbReference>
<dbReference type="InterPro" id="IPR012810">
    <property type="entry name" value="TreS/a-amylase_N"/>
</dbReference>
<dbReference type="NCBIfam" id="TIGR02456">
    <property type="entry name" value="treS_nterm"/>
    <property type="match status" value="1"/>
</dbReference>
<dbReference type="PANTHER" id="PTHR10357">
    <property type="entry name" value="ALPHA-AMYLASE FAMILY MEMBER"/>
    <property type="match status" value="1"/>
</dbReference>
<dbReference type="PANTHER" id="PTHR10357:SF219">
    <property type="entry name" value="MALTOSE ALPHA-D-GLUCOSYLTRANSFERASE"/>
    <property type="match status" value="1"/>
</dbReference>
<dbReference type="Pfam" id="PF00128">
    <property type="entry name" value="Alpha-amylase"/>
    <property type="match status" value="1"/>
</dbReference>
<dbReference type="Pfam" id="PF16657">
    <property type="entry name" value="Malt_amylase_C"/>
    <property type="match status" value="1"/>
</dbReference>
<dbReference type="SMART" id="SM00642">
    <property type="entry name" value="Aamy"/>
    <property type="match status" value="1"/>
</dbReference>
<dbReference type="SUPFAM" id="SSF51445">
    <property type="entry name" value="(Trans)glycosidases"/>
    <property type="match status" value="1"/>
</dbReference>
<dbReference type="SUPFAM" id="SSF51011">
    <property type="entry name" value="Glycosyl hydrolase domain"/>
    <property type="match status" value="1"/>
</dbReference>
<keyword id="KW-0106">Calcium</keyword>
<keyword id="KW-0413">Isomerase</keyword>
<keyword id="KW-0479">Metal-binding</keyword>
<feature type="chain" id="PRO_0000054343" description="Trehalose synthase">
    <location>
        <begin position="1"/>
        <end position="573"/>
    </location>
</feature>
<feature type="active site" description="Nucleophile" evidence="1">
    <location>
        <position position="210"/>
    </location>
</feature>
<feature type="active site" description="Proton donor" evidence="2">
    <location>
        <position position="252"/>
    </location>
</feature>
<feature type="binding site" evidence="2">
    <location>
        <position position="70"/>
    </location>
    <ligand>
        <name>substrate</name>
    </ligand>
</feature>
<feature type="binding site" evidence="1">
    <location>
        <position position="112"/>
    </location>
    <ligand>
        <name>Ca(2+)</name>
        <dbReference type="ChEBI" id="CHEBI:29108"/>
    </ligand>
</feature>
<feature type="binding site" evidence="2">
    <location>
        <position position="113"/>
    </location>
    <ligand>
        <name>substrate</name>
    </ligand>
</feature>
<feature type="binding site" evidence="2">
    <location>
        <position position="178"/>
    </location>
    <ligand>
        <name>substrate</name>
    </ligand>
</feature>
<feature type="binding site" evidence="1">
    <location>
        <position position="180"/>
    </location>
    <ligand>
        <name>Ca(2+)</name>
        <dbReference type="ChEBI" id="CHEBI:29108"/>
    </ligand>
</feature>
<feature type="binding site" evidence="2">
    <location>
        <position position="208"/>
    </location>
    <ligand>
        <name>substrate</name>
    </ligand>
</feature>
<feature type="binding site" evidence="1">
    <location>
        <position position="214"/>
    </location>
    <ligand>
        <name>Ca(2+)</name>
        <dbReference type="ChEBI" id="CHEBI:29108"/>
    </ligand>
</feature>
<feature type="binding site" evidence="1">
    <location>
        <position position="215"/>
    </location>
    <ligand>
        <name>Ca(2+)</name>
        <dbReference type="ChEBI" id="CHEBI:29108"/>
    </ligand>
</feature>
<feature type="binding site" evidence="1">
    <location>
        <position position="217"/>
    </location>
    <ligand>
        <name>Ca(2+)</name>
        <dbReference type="ChEBI" id="CHEBI:29108"/>
    </ligand>
</feature>
<feature type="binding site" evidence="2">
    <location>
        <position position="326"/>
    </location>
    <ligand>
        <name>substrate</name>
    </ligand>
</feature>
<feature type="binding site" evidence="2">
    <location>
        <position position="327"/>
    </location>
    <ligand>
        <name>substrate</name>
    </ligand>
</feature>
<gene>
    <name type="primary">treS</name>
</gene>
<protein>
    <recommendedName>
        <fullName>Trehalose synthase</fullName>
        <ecNumber evidence="1">5.4.99.16</ecNumber>
    </recommendedName>
    <alternativeName>
        <fullName>Maltose alpha-D-glucosyltransferase</fullName>
    </alternativeName>
</protein>
<proteinExistence type="inferred from homology"/>
<comment type="function">
    <text evidence="1">Catalyzes the reversible interconversion of maltose and alpha,alpha-trehalose by transglucosylation.</text>
</comment>
<comment type="catalytic activity">
    <reaction evidence="1">
        <text>D-maltose = alpha,alpha-trehalose</text>
        <dbReference type="Rhea" id="RHEA:15145"/>
        <dbReference type="ChEBI" id="CHEBI:16551"/>
        <dbReference type="ChEBI" id="CHEBI:17306"/>
        <dbReference type="EC" id="5.4.99.16"/>
    </reaction>
</comment>
<comment type="similarity">
    <text evidence="3">Belongs to the glycosyl hydrolase 13 family. TreS subfamily.</text>
</comment>
<evidence type="ECO:0000250" key="1">
    <source>
        <dbReference type="UniProtKB" id="A0R6E0"/>
    </source>
</evidence>
<evidence type="ECO:0000250" key="2">
    <source>
        <dbReference type="UniProtKB" id="Q9ZEU2"/>
    </source>
</evidence>
<evidence type="ECO:0000305" key="3"/>